<keyword id="KW-0488">Methylation</keyword>
<keyword id="KW-1185">Reference proteome</keyword>
<keyword id="KW-0687">Ribonucleoprotein</keyword>
<keyword id="KW-0689">Ribosomal protein</keyword>
<keyword id="KW-0694">RNA-binding</keyword>
<keyword id="KW-0699">rRNA-binding</keyword>
<keyword id="KW-0820">tRNA-binding</keyword>
<comment type="function">
    <text evidence="2">With S4 and S5 plays an important role in translational accuracy.</text>
</comment>
<comment type="function">
    <text evidence="2">Interacts with and stabilizes bases of the 16S rRNA that are involved in tRNA selection in the A site and with the mRNA backbone. Located at the interface of the 30S and 50S subunits, it traverses the body of the 30S subunit contacting proteins on the other side and probably holding the rRNA structure together. The combined cluster of proteins S8, S12 and S17 appears to hold together the shoulder and platform of the 30S subunit.</text>
</comment>
<comment type="subunit">
    <text evidence="2">Part of the 30S ribosomal subunit. Contacts proteins S8 and S17. May interact with IF1 in the 30S initiation complex.</text>
</comment>
<comment type="similarity">
    <text evidence="2">Belongs to the universal ribosomal protein uS12 family.</text>
</comment>
<sequence length="123" mass="13845">MPTIQQLIRTERSKVQKKTKSPALKQCPQRRGVCTRVYTTTPKKPNSALRKVARVRLTSGFEVTAYIPGIGHNLQEHSVVLIRGGRVKDLPGVRYHIIRGTLDATGVKDRKQGRSKYGTKRPK</sequence>
<evidence type="ECO:0000250" key="1"/>
<evidence type="ECO:0000255" key="2">
    <source>
        <dbReference type="HAMAP-Rule" id="MF_00403"/>
    </source>
</evidence>
<evidence type="ECO:0000256" key="3">
    <source>
        <dbReference type="SAM" id="MobiDB-lite"/>
    </source>
</evidence>
<evidence type="ECO:0000305" key="4"/>
<organism>
    <name type="scientific">Gloeothece citriformis (strain PCC 7424)</name>
    <name type="common">Cyanothece sp. (strain PCC 7424)</name>
    <dbReference type="NCBI Taxonomy" id="65393"/>
    <lineage>
        <taxon>Bacteria</taxon>
        <taxon>Bacillati</taxon>
        <taxon>Cyanobacteriota</taxon>
        <taxon>Cyanophyceae</taxon>
        <taxon>Oscillatoriophycideae</taxon>
        <taxon>Chroococcales</taxon>
        <taxon>Aphanothecaceae</taxon>
        <taxon>Gloeothece</taxon>
        <taxon>Gloeothece citriformis</taxon>
    </lineage>
</organism>
<accession>B7K837</accession>
<feature type="chain" id="PRO_1000194150" description="Small ribosomal subunit protein uS12">
    <location>
        <begin position="1"/>
        <end position="123"/>
    </location>
</feature>
<feature type="region of interest" description="Disordered" evidence="3">
    <location>
        <begin position="1"/>
        <end position="28"/>
    </location>
</feature>
<feature type="region of interest" description="Disordered" evidence="3">
    <location>
        <begin position="104"/>
        <end position="123"/>
    </location>
</feature>
<feature type="compositionally biased region" description="Basic residues" evidence="3">
    <location>
        <begin position="113"/>
        <end position="123"/>
    </location>
</feature>
<feature type="modified residue" description="3-methylthioaspartic acid" evidence="1">
    <location>
        <position position="89"/>
    </location>
</feature>
<gene>
    <name evidence="2" type="primary">rpsL</name>
    <name evidence="2" type="synonym">rps12</name>
    <name type="ordered locus">PCC7424_0052</name>
</gene>
<protein>
    <recommendedName>
        <fullName evidence="2">Small ribosomal subunit protein uS12</fullName>
    </recommendedName>
    <alternativeName>
        <fullName evidence="4">30S ribosomal protein S12</fullName>
    </alternativeName>
</protein>
<dbReference type="EMBL" id="CP001291">
    <property type="protein sequence ID" value="ACK68525.1"/>
    <property type="molecule type" value="Genomic_DNA"/>
</dbReference>
<dbReference type="RefSeq" id="WP_012597476.1">
    <property type="nucleotide sequence ID" value="NC_011729.1"/>
</dbReference>
<dbReference type="SMR" id="B7K837"/>
<dbReference type="STRING" id="65393.PCC7424_0052"/>
<dbReference type="KEGG" id="cyc:PCC7424_0052"/>
<dbReference type="eggNOG" id="COG0048">
    <property type="taxonomic scope" value="Bacteria"/>
</dbReference>
<dbReference type="HOGENOM" id="CLU_104295_1_2_3"/>
<dbReference type="OrthoDB" id="9802366at2"/>
<dbReference type="Proteomes" id="UP000002384">
    <property type="component" value="Chromosome"/>
</dbReference>
<dbReference type="GO" id="GO:0015935">
    <property type="term" value="C:small ribosomal subunit"/>
    <property type="evidence" value="ECO:0007669"/>
    <property type="project" value="InterPro"/>
</dbReference>
<dbReference type="GO" id="GO:0019843">
    <property type="term" value="F:rRNA binding"/>
    <property type="evidence" value="ECO:0007669"/>
    <property type="project" value="UniProtKB-UniRule"/>
</dbReference>
<dbReference type="GO" id="GO:0003735">
    <property type="term" value="F:structural constituent of ribosome"/>
    <property type="evidence" value="ECO:0007669"/>
    <property type="project" value="InterPro"/>
</dbReference>
<dbReference type="GO" id="GO:0000049">
    <property type="term" value="F:tRNA binding"/>
    <property type="evidence" value="ECO:0007669"/>
    <property type="project" value="UniProtKB-UniRule"/>
</dbReference>
<dbReference type="GO" id="GO:0006412">
    <property type="term" value="P:translation"/>
    <property type="evidence" value="ECO:0007669"/>
    <property type="project" value="UniProtKB-UniRule"/>
</dbReference>
<dbReference type="CDD" id="cd03368">
    <property type="entry name" value="Ribosomal_S12"/>
    <property type="match status" value="1"/>
</dbReference>
<dbReference type="FunFam" id="2.40.50.140:FF:000001">
    <property type="entry name" value="30S ribosomal protein S12"/>
    <property type="match status" value="1"/>
</dbReference>
<dbReference type="Gene3D" id="2.40.50.140">
    <property type="entry name" value="Nucleic acid-binding proteins"/>
    <property type="match status" value="1"/>
</dbReference>
<dbReference type="HAMAP" id="MF_00403_B">
    <property type="entry name" value="Ribosomal_uS12_B"/>
    <property type="match status" value="1"/>
</dbReference>
<dbReference type="InterPro" id="IPR012340">
    <property type="entry name" value="NA-bd_OB-fold"/>
</dbReference>
<dbReference type="InterPro" id="IPR006032">
    <property type="entry name" value="Ribosomal_uS12"/>
</dbReference>
<dbReference type="InterPro" id="IPR005679">
    <property type="entry name" value="Ribosomal_uS12_bac"/>
</dbReference>
<dbReference type="NCBIfam" id="TIGR00981">
    <property type="entry name" value="rpsL_bact"/>
    <property type="match status" value="1"/>
</dbReference>
<dbReference type="PANTHER" id="PTHR11652">
    <property type="entry name" value="30S RIBOSOMAL PROTEIN S12 FAMILY MEMBER"/>
    <property type="match status" value="1"/>
</dbReference>
<dbReference type="Pfam" id="PF00164">
    <property type="entry name" value="Ribosom_S12_S23"/>
    <property type="match status" value="1"/>
</dbReference>
<dbReference type="PIRSF" id="PIRSF002133">
    <property type="entry name" value="Ribosomal_S12/S23"/>
    <property type="match status" value="1"/>
</dbReference>
<dbReference type="PRINTS" id="PR01034">
    <property type="entry name" value="RIBOSOMALS12"/>
</dbReference>
<dbReference type="SUPFAM" id="SSF50249">
    <property type="entry name" value="Nucleic acid-binding proteins"/>
    <property type="match status" value="1"/>
</dbReference>
<dbReference type="PROSITE" id="PS00055">
    <property type="entry name" value="RIBOSOMAL_S12"/>
    <property type="match status" value="1"/>
</dbReference>
<proteinExistence type="inferred from homology"/>
<reference key="1">
    <citation type="journal article" date="2011" name="MBio">
        <title>Novel metabolic attributes of the genus Cyanothece, comprising a group of unicellular nitrogen-fixing Cyanobacteria.</title>
        <authorList>
            <person name="Bandyopadhyay A."/>
            <person name="Elvitigala T."/>
            <person name="Welsh E."/>
            <person name="Stockel J."/>
            <person name="Liberton M."/>
            <person name="Min H."/>
            <person name="Sherman L.A."/>
            <person name="Pakrasi H.B."/>
        </authorList>
    </citation>
    <scope>NUCLEOTIDE SEQUENCE [LARGE SCALE GENOMIC DNA]</scope>
    <source>
        <strain>PCC 7424</strain>
    </source>
</reference>
<name>RS12_GLOC7</name>